<reference key="1">
    <citation type="journal article" date="2007" name="PLoS Biol.">
        <title>Evolution of symbiotic bacteria in the distal human intestine.</title>
        <authorList>
            <person name="Xu J."/>
            <person name="Mahowald M.A."/>
            <person name="Ley R.E."/>
            <person name="Lozupone C.A."/>
            <person name="Hamady M."/>
            <person name="Martens E.C."/>
            <person name="Henrissat B."/>
            <person name="Coutinho P.M."/>
            <person name="Minx P."/>
            <person name="Latreille P."/>
            <person name="Cordum H."/>
            <person name="Van Brunt A."/>
            <person name="Kim K."/>
            <person name="Fulton R.S."/>
            <person name="Fulton L.A."/>
            <person name="Clifton S.W."/>
            <person name="Wilson R.K."/>
            <person name="Knight R.D."/>
            <person name="Gordon J.I."/>
        </authorList>
    </citation>
    <scope>NUCLEOTIDE SEQUENCE [LARGE SCALE GENOMIC DNA]</scope>
    <source>
        <strain>ATCC 8482 / DSM 1447 / JCM 5826 / CCUG 4940 / NBRC 14291 / NCTC 11154</strain>
    </source>
</reference>
<sequence>MAAKPGIPKGTRDFSPVEMAKRNYIFNTIRDVFHLFGYQQIETPSMENLSTLMGKYGDEGDKLLFKIQNSGDYFNGITDEELLSRNAVKLASKFCEKGLRYDLTVPFARYVVMHRDEISFPFKRYQIQPVWRADRPQKGRYREFYQCDADVVGSNSLLNEVELVQMIDRVFGKFGVRVSIKINNRKILTGIAEIIGEADKIVDITVAIDKLDKIGLENVNAELASKGIPQEAIDKLQPIILLSGSNEEKLETLKTVLATSEAGLKGVEESEFILKTVSALGVKSEVELDLTLARGLNYYTGAIFEVKALDVQIGSISGGGRYDNLTGVFGMDGMSGVGISFGADRIFDVLNQLDLYPKEAVNGTELLFVNFGDKEAAYCLPILTKVREAGVRAEIYPDASKMKKQMGYANDKQIPFVAIVGENEMNEGKLTLKNMTTGEQSLVTPDELLAVVKA</sequence>
<comment type="catalytic activity">
    <reaction evidence="1">
        <text>tRNA(His) + L-histidine + ATP = L-histidyl-tRNA(His) + AMP + diphosphate + H(+)</text>
        <dbReference type="Rhea" id="RHEA:17313"/>
        <dbReference type="Rhea" id="RHEA-COMP:9665"/>
        <dbReference type="Rhea" id="RHEA-COMP:9689"/>
        <dbReference type="ChEBI" id="CHEBI:15378"/>
        <dbReference type="ChEBI" id="CHEBI:30616"/>
        <dbReference type="ChEBI" id="CHEBI:33019"/>
        <dbReference type="ChEBI" id="CHEBI:57595"/>
        <dbReference type="ChEBI" id="CHEBI:78442"/>
        <dbReference type="ChEBI" id="CHEBI:78527"/>
        <dbReference type="ChEBI" id="CHEBI:456215"/>
        <dbReference type="EC" id="6.1.1.21"/>
    </reaction>
</comment>
<comment type="subunit">
    <text evidence="1">Homodimer.</text>
</comment>
<comment type="subcellular location">
    <subcellularLocation>
        <location evidence="1">Cytoplasm</location>
    </subcellularLocation>
</comment>
<comment type="similarity">
    <text evidence="1">Belongs to the class-II aminoacyl-tRNA synthetase family.</text>
</comment>
<proteinExistence type="inferred from homology"/>
<gene>
    <name evidence="1" type="primary">hisS</name>
    <name type="ordered locus">BVU_0351</name>
</gene>
<name>SYH_PHOV8</name>
<keyword id="KW-0030">Aminoacyl-tRNA synthetase</keyword>
<keyword id="KW-0067">ATP-binding</keyword>
<keyword id="KW-0963">Cytoplasm</keyword>
<keyword id="KW-0436">Ligase</keyword>
<keyword id="KW-0547">Nucleotide-binding</keyword>
<keyword id="KW-0648">Protein biosynthesis</keyword>
<dbReference type="EC" id="6.1.1.21" evidence="1"/>
<dbReference type="EMBL" id="CP000139">
    <property type="protein sequence ID" value="ABR38070.1"/>
    <property type="molecule type" value="Genomic_DNA"/>
</dbReference>
<dbReference type="RefSeq" id="WP_005842343.1">
    <property type="nucleotide sequence ID" value="NZ_CAXUAI010000006.1"/>
</dbReference>
<dbReference type="SMR" id="A6KXA6"/>
<dbReference type="STRING" id="435590.BVU_0351"/>
<dbReference type="PaxDb" id="435590-BVU_0351"/>
<dbReference type="DNASU" id="5301320"/>
<dbReference type="GeneID" id="5301320"/>
<dbReference type="KEGG" id="bvu:BVU_0351"/>
<dbReference type="eggNOG" id="COG0124">
    <property type="taxonomic scope" value="Bacteria"/>
</dbReference>
<dbReference type="HOGENOM" id="CLU_025113_3_0_10"/>
<dbReference type="BioCyc" id="BVUL435590:G1G59-369-MONOMER"/>
<dbReference type="Proteomes" id="UP000002861">
    <property type="component" value="Chromosome"/>
</dbReference>
<dbReference type="GO" id="GO:0005737">
    <property type="term" value="C:cytoplasm"/>
    <property type="evidence" value="ECO:0007669"/>
    <property type="project" value="UniProtKB-SubCell"/>
</dbReference>
<dbReference type="GO" id="GO:0005524">
    <property type="term" value="F:ATP binding"/>
    <property type="evidence" value="ECO:0007669"/>
    <property type="project" value="UniProtKB-UniRule"/>
</dbReference>
<dbReference type="GO" id="GO:0004821">
    <property type="term" value="F:histidine-tRNA ligase activity"/>
    <property type="evidence" value="ECO:0007669"/>
    <property type="project" value="UniProtKB-UniRule"/>
</dbReference>
<dbReference type="GO" id="GO:0006427">
    <property type="term" value="P:histidyl-tRNA aminoacylation"/>
    <property type="evidence" value="ECO:0007669"/>
    <property type="project" value="UniProtKB-UniRule"/>
</dbReference>
<dbReference type="CDD" id="cd00773">
    <property type="entry name" value="HisRS-like_core"/>
    <property type="match status" value="1"/>
</dbReference>
<dbReference type="CDD" id="cd00859">
    <property type="entry name" value="HisRS_anticodon"/>
    <property type="match status" value="1"/>
</dbReference>
<dbReference type="FunFam" id="3.30.930.10:FF:000093">
    <property type="entry name" value="Histidine--tRNA ligase"/>
    <property type="match status" value="1"/>
</dbReference>
<dbReference type="Gene3D" id="3.40.50.800">
    <property type="entry name" value="Anticodon-binding domain"/>
    <property type="match status" value="1"/>
</dbReference>
<dbReference type="Gene3D" id="3.30.930.10">
    <property type="entry name" value="Bira Bifunctional Protein, Domain 2"/>
    <property type="match status" value="1"/>
</dbReference>
<dbReference type="HAMAP" id="MF_00127">
    <property type="entry name" value="His_tRNA_synth"/>
    <property type="match status" value="1"/>
</dbReference>
<dbReference type="InterPro" id="IPR006195">
    <property type="entry name" value="aa-tRNA-synth_II"/>
</dbReference>
<dbReference type="InterPro" id="IPR045864">
    <property type="entry name" value="aa-tRNA-synth_II/BPL/LPL"/>
</dbReference>
<dbReference type="InterPro" id="IPR004154">
    <property type="entry name" value="Anticodon-bd"/>
</dbReference>
<dbReference type="InterPro" id="IPR036621">
    <property type="entry name" value="Anticodon-bd_dom_sf"/>
</dbReference>
<dbReference type="InterPro" id="IPR015807">
    <property type="entry name" value="His-tRNA-ligase"/>
</dbReference>
<dbReference type="InterPro" id="IPR041715">
    <property type="entry name" value="HisRS-like_core"/>
</dbReference>
<dbReference type="InterPro" id="IPR004516">
    <property type="entry name" value="HisRS/HisZ"/>
</dbReference>
<dbReference type="InterPro" id="IPR033656">
    <property type="entry name" value="HisRS_anticodon"/>
</dbReference>
<dbReference type="NCBIfam" id="TIGR00442">
    <property type="entry name" value="hisS"/>
    <property type="match status" value="1"/>
</dbReference>
<dbReference type="PANTHER" id="PTHR11476:SF7">
    <property type="entry name" value="HISTIDINE--TRNA LIGASE"/>
    <property type="match status" value="1"/>
</dbReference>
<dbReference type="PANTHER" id="PTHR11476">
    <property type="entry name" value="HISTIDYL-TRNA SYNTHETASE"/>
    <property type="match status" value="1"/>
</dbReference>
<dbReference type="Pfam" id="PF03129">
    <property type="entry name" value="HGTP_anticodon"/>
    <property type="match status" value="1"/>
</dbReference>
<dbReference type="Pfam" id="PF13393">
    <property type="entry name" value="tRNA-synt_His"/>
    <property type="match status" value="2"/>
</dbReference>
<dbReference type="PIRSF" id="PIRSF001549">
    <property type="entry name" value="His-tRNA_synth"/>
    <property type="match status" value="1"/>
</dbReference>
<dbReference type="SUPFAM" id="SSF52954">
    <property type="entry name" value="Class II aaRS ABD-related"/>
    <property type="match status" value="1"/>
</dbReference>
<dbReference type="SUPFAM" id="SSF55681">
    <property type="entry name" value="Class II aaRS and biotin synthetases"/>
    <property type="match status" value="1"/>
</dbReference>
<dbReference type="PROSITE" id="PS50862">
    <property type="entry name" value="AA_TRNA_LIGASE_II"/>
    <property type="match status" value="1"/>
</dbReference>
<feature type="chain" id="PRO_1000016313" description="Histidine--tRNA ligase">
    <location>
        <begin position="1"/>
        <end position="454"/>
    </location>
</feature>
<evidence type="ECO:0000255" key="1">
    <source>
        <dbReference type="HAMAP-Rule" id="MF_00127"/>
    </source>
</evidence>
<organism>
    <name type="scientific">Phocaeicola vulgatus (strain ATCC 8482 / DSM 1447 / JCM 5826 / CCUG 4940 / NBRC 14291 / NCTC 11154)</name>
    <name type="common">Bacteroides vulgatus</name>
    <dbReference type="NCBI Taxonomy" id="435590"/>
    <lineage>
        <taxon>Bacteria</taxon>
        <taxon>Pseudomonadati</taxon>
        <taxon>Bacteroidota</taxon>
        <taxon>Bacteroidia</taxon>
        <taxon>Bacteroidales</taxon>
        <taxon>Bacteroidaceae</taxon>
        <taxon>Phocaeicola</taxon>
    </lineage>
</organism>
<accession>A6KXA6</accession>
<protein>
    <recommendedName>
        <fullName evidence="1">Histidine--tRNA ligase</fullName>
        <ecNumber evidence="1">6.1.1.21</ecNumber>
    </recommendedName>
    <alternativeName>
        <fullName evidence="1">Histidyl-tRNA synthetase</fullName>
        <shortName evidence="1">HisRS</shortName>
    </alternativeName>
</protein>